<dbReference type="EC" id="3.1.27.-"/>
<dbReference type="EMBL" id="U24101">
    <property type="protein sequence ID" value="AAC50147.1"/>
    <property type="molecule type" value="Genomic_DNA"/>
</dbReference>
<dbReference type="PIR" id="I61896">
    <property type="entry name" value="I61896"/>
</dbReference>
<dbReference type="BMRB" id="P47781"/>
<dbReference type="SMR" id="P47781"/>
<dbReference type="GlyCosmos" id="P47781">
    <property type="glycosylation" value="4 sites, No reported glycans"/>
</dbReference>
<dbReference type="GO" id="GO:0005615">
    <property type="term" value="C:extracellular space"/>
    <property type="evidence" value="ECO:0007669"/>
    <property type="project" value="TreeGrafter"/>
</dbReference>
<dbReference type="GO" id="GO:0004519">
    <property type="term" value="F:endonuclease activity"/>
    <property type="evidence" value="ECO:0007669"/>
    <property type="project" value="UniProtKB-KW"/>
</dbReference>
<dbReference type="GO" id="GO:0003676">
    <property type="term" value="F:nucleic acid binding"/>
    <property type="evidence" value="ECO:0007669"/>
    <property type="project" value="InterPro"/>
</dbReference>
<dbReference type="GO" id="GO:0004540">
    <property type="term" value="F:RNA nuclease activity"/>
    <property type="evidence" value="ECO:0007669"/>
    <property type="project" value="TreeGrafter"/>
</dbReference>
<dbReference type="GO" id="GO:0006935">
    <property type="term" value="P:chemotaxis"/>
    <property type="evidence" value="ECO:0007669"/>
    <property type="project" value="TreeGrafter"/>
</dbReference>
<dbReference type="GO" id="GO:0050830">
    <property type="term" value="P:defense response to Gram-positive bacterium"/>
    <property type="evidence" value="ECO:0007669"/>
    <property type="project" value="TreeGrafter"/>
</dbReference>
<dbReference type="GO" id="GO:0002227">
    <property type="term" value="P:innate immune response in mucosa"/>
    <property type="evidence" value="ECO:0007669"/>
    <property type="project" value="TreeGrafter"/>
</dbReference>
<dbReference type="CDD" id="cd06265">
    <property type="entry name" value="RNase_A_canonical"/>
    <property type="match status" value="1"/>
</dbReference>
<dbReference type="FunFam" id="3.10.130.10:FF:000001">
    <property type="entry name" value="Ribonuclease pancreatic"/>
    <property type="match status" value="1"/>
</dbReference>
<dbReference type="Gene3D" id="3.10.130.10">
    <property type="entry name" value="Ribonuclease A-like domain"/>
    <property type="match status" value="1"/>
</dbReference>
<dbReference type="InterPro" id="IPR001427">
    <property type="entry name" value="RNaseA"/>
</dbReference>
<dbReference type="InterPro" id="IPR036816">
    <property type="entry name" value="RNaseA-like_dom_sf"/>
</dbReference>
<dbReference type="InterPro" id="IPR023411">
    <property type="entry name" value="RNaseA_AS"/>
</dbReference>
<dbReference type="InterPro" id="IPR023412">
    <property type="entry name" value="RNaseA_domain"/>
</dbReference>
<dbReference type="PANTHER" id="PTHR11437:SF3">
    <property type="entry name" value="EOSINOPHIL CATIONIC PROTEIN"/>
    <property type="match status" value="1"/>
</dbReference>
<dbReference type="PANTHER" id="PTHR11437">
    <property type="entry name" value="RIBONUCLEASE"/>
    <property type="match status" value="1"/>
</dbReference>
<dbReference type="Pfam" id="PF00074">
    <property type="entry name" value="RnaseA"/>
    <property type="match status" value="1"/>
</dbReference>
<dbReference type="PRINTS" id="PR00794">
    <property type="entry name" value="RIBONUCLEASE"/>
</dbReference>
<dbReference type="SMART" id="SM00092">
    <property type="entry name" value="RNAse_Pc"/>
    <property type="match status" value="1"/>
</dbReference>
<dbReference type="SUPFAM" id="SSF54076">
    <property type="entry name" value="RNase A-like"/>
    <property type="match status" value="1"/>
</dbReference>
<dbReference type="PROSITE" id="PS00127">
    <property type="entry name" value="RNASE_PANCREATIC"/>
    <property type="match status" value="1"/>
</dbReference>
<accession>P47781</accession>
<gene>
    <name type="primary">RNASE3</name>
    <name type="synonym">RNS3</name>
</gene>
<name>ECP_PONPY</name>
<feature type="signal peptide" evidence="1">
    <location>
        <begin position="1"/>
        <end position="27"/>
    </location>
</feature>
<feature type="chain" id="PRO_0000030865" description="Eosinophil cationic protein">
    <location>
        <begin position="28"/>
        <end position="160"/>
    </location>
</feature>
<feature type="region of interest" description="Required for nearly all of the bactericidal activities; partially involved in LPS-binding" evidence="1">
    <location>
        <begin position="28"/>
        <end position="72"/>
    </location>
</feature>
<feature type="active site" description="Proton acceptor" evidence="1">
    <location>
        <position position="42"/>
    </location>
</feature>
<feature type="active site" description="Proton donor" evidence="1">
    <location>
        <position position="155"/>
    </location>
</feature>
<feature type="binding site" evidence="1">
    <location>
        <begin position="65"/>
        <end position="69"/>
    </location>
    <ligand>
        <name>substrate</name>
    </ligand>
</feature>
<feature type="modified residue" description="3'-nitrotyrosine" evidence="2">
    <location>
        <position position="60"/>
    </location>
</feature>
<feature type="glycosylation site" description="N-linked (GlcNAc...) asparagine" evidence="3">
    <location>
        <position position="86"/>
    </location>
</feature>
<feature type="glycosylation site" description="N-linked (GlcNAc...) asparagine" evidence="3">
    <location>
        <position position="92"/>
    </location>
</feature>
<feature type="glycosylation site" description="N-linked (GlcNAc...) asparagine" evidence="3">
    <location>
        <position position="111"/>
    </location>
</feature>
<feature type="glycosylation site" description="N-linked (GlcNAc...) asparagine" evidence="3">
    <location>
        <position position="119"/>
    </location>
</feature>
<feature type="disulfide bond" evidence="1">
    <location>
        <begin position="50"/>
        <end position="110"/>
    </location>
</feature>
<feature type="disulfide bond" evidence="1">
    <location>
        <begin position="64"/>
        <end position="123"/>
    </location>
</feature>
<feature type="disulfide bond" evidence="1">
    <location>
        <begin position="82"/>
        <end position="138"/>
    </location>
</feature>
<feature type="disulfide bond" evidence="1">
    <location>
        <begin position="89"/>
        <end position="98"/>
    </location>
</feature>
<sequence length="160" mass="18262">MVPKLFTSQICLLLLLGLSGVGGSLHAKPRQFTRAQWFAIQHVSLNPPQCTTAMRVINNYQRRCKDQNTFLRTTFANVVNVCGNPNITCPRNRTLHNCHRSRFQVPLLHCNLTNPGAQNISNCKYADRTERRFYVVACDNRDPRDSPRYPVVPVHLDTTI</sequence>
<proteinExistence type="inferred from homology"/>
<organism>
    <name type="scientific">Pongo pygmaeus</name>
    <name type="common">Bornean orangutan</name>
    <dbReference type="NCBI Taxonomy" id="9600"/>
    <lineage>
        <taxon>Eukaryota</taxon>
        <taxon>Metazoa</taxon>
        <taxon>Chordata</taxon>
        <taxon>Craniata</taxon>
        <taxon>Vertebrata</taxon>
        <taxon>Euteleostomi</taxon>
        <taxon>Mammalia</taxon>
        <taxon>Eutheria</taxon>
        <taxon>Euarchontoglires</taxon>
        <taxon>Primates</taxon>
        <taxon>Haplorrhini</taxon>
        <taxon>Catarrhini</taxon>
        <taxon>Hominidae</taxon>
        <taxon>Pongo</taxon>
    </lineage>
</organism>
<reference key="1">
    <citation type="journal article" date="1995" name="Nat. Genet.">
        <title>Rapid evolution of a unique family of primate ribonuclease genes.</title>
        <authorList>
            <person name="Rosenberg H.F."/>
            <person name="Dyer K.D."/>
            <person name="Tiffany H.L."/>
            <person name="Gonzalez M."/>
        </authorList>
    </citation>
    <scope>NUCLEOTIDE SEQUENCE [GENOMIC DNA]</scope>
</reference>
<protein>
    <recommendedName>
        <fullName>Eosinophil cationic protein</fullName>
        <shortName>ECP</shortName>
        <ecNumber>3.1.27.-</ecNumber>
    </recommendedName>
    <alternativeName>
        <fullName>Ribonuclease 3</fullName>
        <shortName>RNase 3</shortName>
    </alternativeName>
</protein>
<keyword id="KW-1015">Disulfide bond</keyword>
<keyword id="KW-0255">Endonuclease</keyword>
<keyword id="KW-0325">Glycoprotein</keyword>
<keyword id="KW-0378">Hydrolase</keyword>
<keyword id="KW-0944">Nitration</keyword>
<keyword id="KW-0540">Nuclease</keyword>
<keyword id="KW-0964">Secreted</keyword>
<keyword id="KW-0732">Signal</keyword>
<comment type="function">
    <text evidence="1">Cytotoxin and helminthotoxin with low-efficiency ribonuclease activity. Possesses a wide variety of biological activities. Exhibits antibacterial activity (By similarity).</text>
</comment>
<comment type="subunit">
    <text evidence="1">Interacts with bacterial lipopolysaccharide (LPS) and lipoteichoic acid (LTA). In vitro interacts with phospholipid bilayers.</text>
</comment>
<comment type="subcellular location">
    <subcellularLocation>
        <location evidence="1">Secreted</location>
    </subcellularLocation>
    <text evidence="1">Located in the matrix of eosinophil large specific granule, which are released following activation by an immune stimulus.</text>
</comment>
<comment type="similarity">
    <text evidence="4">Belongs to the pancreatic ribonuclease family.</text>
</comment>
<evidence type="ECO:0000250" key="1"/>
<evidence type="ECO:0000250" key="2">
    <source>
        <dbReference type="UniProtKB" id="P12724"/>
    </source>
</evidence>
<evidence type="ECO:0000255" key="3"/>
<evidence type="ECO:0000305" key="4"/>